<gene>
    <name type="primary">Tnfsf11</name>
    <name type="synonym">Opgl</name>
    <name type="synonym">Rankl</name>
    <name type="synonym">Trance</name>
</gene>
<reference key="1">
    <citation type="journal article" date="2000" name="J. Bone Miner. Res.">
        <title>Cloning, sequence and functional characterization of the rat homologue of receptor activator of NF-kB ligand.</title>
        <authorList>
            <person name="Xu J.K."/>
            <person name="Tan J.K."/>
            <person name="Huang L."/>
            <person name="Gao X.H."/>
            <person name="Laird R."/>
            <person name="Liu D."/>
            <person name="Wysocki S."/>
            <person name="Zheng M.H."/>
        </authorList>
    </citation>
    <scope>NUCLEOTIDE SEQUENCE [MRNA]</scope>
    <source>
        <tissue>Tibial bone</tissue>
    </source>
</reference>
<reference key="2">
    <citation type="journal article" date="2001" name="Int. J. Dev. Biol.">
        <title>Evidence that the rat osteopetrotic mutation toothless (tl) is not in the TNFSF11 (TRANCE, RANKL, ODF, OPGL) gene.</title>
        <authorList>
            <person name="Odgren P.R."/>
            <person name="Kim N."/>
            <person name="van Wesenbeeck L."/>
            <person name="MacKay C."/>
            <person name="Mason-Savas A."/>
            <person name="Safadi F.F."/>
            <person name="Popoff S.N."/>
            <person name="Lengner C."/>
            <person name="van-Hul W."/>
            <person name="Choi Y."/>
            <person name="Marks S.C. Jr."/>
        </authorList>
    </citation>
    <scope>NUCLEOTIDE SEQUENCE [MRNA] OF 266-318</scope>
    <source>
        <strain>Fischer 344</strain>
    </source>
</reference>
<name>TNF11_RAT</name>
<protein>
    <recommendedName>
        <fullName>Tumor necrosis factor ligand superfamily member 11</fullName>
    </recommendedName>
    <alternativeName>
        <fullName>Osteoclast differentiation factor</fullName>
        <shortName>ODF</shortName>
    </alternativeName>
    <alternativeName>
        <fullName>Osteoprotegerin ligand</fullName>
        <shortName>OPGL</shortName>
    </alternativeName>
    <alternativeName>
        <fullName>Receptor activator of nuclear factor kappa-B ligand</fullName>
        <shortName>RANKL</shortName>
    </alternativeName>
    <alternativeName>
        <fullName>TNF-related activation-induced cytokine</fullName>
        <shortName>TRANCE</shortName>
    </alternativeName>
    <cdAntigenName>CD254</cdAntigenName>
    <component>
        <recommendedName>
            <fullName>Tumor necrosis factor ligand superfamily member 11, membrane form</fullName>
        </recommendedName>
    </component>
    <component>
        <recommendedName>
            <fullName>Tumor necrosis factor ligand superfamily member 11, soluble form</fullName>
        </recommendedName>
    </component>
</protein>
<dbReference type="EMBL" id="AF187319">
    <property type="protein sequence ID" value="AAG17031.1"/>
    <property type="molecule type" value="mRNA"/>
</dbReference>
<dbReference type="EMBL" id="AF425669">
    <property type="protein sequence ID" value="AAL23963.1"/>
    <property type="molecule type" value="mRNA"/>
</dbReference>
<dbReference type="RefSeq" id="NP_476490.1">
    <property type="nucleotide sequence ID" value="NM_057149.1"/>
</dbReference>
<dbReference type="SMR" id="Q9ESE2"/>
<dbReference type="FunCoup" id="Q9ESE2">
    <property type="interactions" value="124"/>
</dbReference>
<dbReference type="STRING" id="10116.ENSRNOP00000013210"/>
<dbReference type="GlyCosmos" id="Q9ESE2">
    <property type="glycosylation" value="2 sites, No reported glycans"/>
</dbReference>
<dbReference type="GlyGen" id="Q9ESE2">
    <property type="glycosylation" value="2 sites"/>
</dbReference>
<dbReference type="PhosphoSitePlus" id="Q9ESE2"/>
<dbReference type="PaxDb" id="10116-ENSRNOP00000013210"/>
<dbReference type="GeneID" id="117516"/>
<dbReference type="KEGG" id="rno:117516"/>
<dbReference type="UCSC" id="RGD:620784">
    <property type="organism name" value="rat"/>
</dbReference>
<dbReference type="AGR" id="RGD:620784"/>
<dbReference type="CTD" id="8600"/>
<dbReference type="RGD" id="620784">
    <property type="gene designation" value="Tnfsf11"/>
</dbReference>
<dbReference type="eggNOG" id="ENOG502R8MX">
    <property type="taxonomic scope" value="Eukaryota"/>
</dbReference>
<dbReference type="InParanoid" id="Q9ESE2"/>
<dbReference type="PhylomeDB" id="Q9ESE2"/>
<dbReference type="Reactome" id="R-RNO-5668541">
    <property type="pathway name" value="TNFR2 non-canonical NF-kB pathway"/>
</dbReference>
<dbReference type="Reactome" id="R-RNO-5669034">
    <property type="pathway name" value="TNFs bind their physiological receptors"/>
</dbReference>
<dbReference type="Reactome" id="R-RNO-5676594">
    <property type="pathway name" value="TNF receptor superfamily (TNFSF) members mediating non-canonical NF-kB pathway"/>
</dbReference>
<dbReference type="Reactome" id="R-RNO-9856649">
    <property type="pathway name" value="Transcriptional and post-translational regulation of MITF-M expression and activity"/>
</dbReference>
<dbReference type="PRO" id="PR:Q9ESE2"/>
<dbReference type="Proteomes" id="UP000002494">
    <property type="component" value="Unplaced"/>
</dbReference>
<dbReference type="GO" id="GO:0005615">
    <property type="term" value="C:extracellular space"/>
    <property type="evidence" value="ECO:0000318"/>
    <property type="project" value="GO_Central"/>
</dbReference>
<dbReference type="GO" id="GO:0005886">
    <property type="term" value="C:plasma membrane"/>
    <property type="evidence" value="ECO:0007669"/>
    <property type="project" value="UniProtKB-SubCell"/>
</dbReference>
<dbReference type="GO" id="GO:0005125">
    <property type="term" value="F:cytokine activity"/>
    <property type="evidence" value="ECO:0000266"/>
    <property type="project" value="RGD"/>
</dbReference>
<dbReference type="GO" id="GO:0042802">
    <property type="term" value="F:identical protein binding"/>
    <property type="evidence" value="ECO:0000266"/>
    <property type="project" value="RGD"/>
</dbReference>
<dbReference type="GO" id="GO:0048018">
    <property type="term" value="F:receptor ligand activity"/>
    <property type="evidence" value="ECO:0000266"/>
    <property type="project" value="RGD"/>
</dbReference>
<dbReference type="GO" id="GO:0005164">
    <property type="term" value="F:tumor necrosis factor receptor binding"/>
    <property type="evidence" value="ECO:0007669"/>
    <property type="project" value="InterPro"/>
</dbReference>
<dbReference type="GO" id="GO:0032813">
    <property type="term" value="F:tumor necrosis factor receptor superfamily binding"/>
    <property type="evidence" value="ECO:0000266"/>
    <property type="project" value="RGD"/>
</dbReference>
<dbReference type="GO" id="GO:0009887">
    <property type="term" value="P:animal organ morphogenesis"/>
    <property type="evidence" value="ECO:0000266"/>
    <property type="project" value="RGD"/>
</dbReference>
<dbReference type="GO" id="GO:0060348">
    <property type="term" value="P:bone development"/>
    <property type="evidence" value="ECO:0000266"/>
    <property type="project" value="RGD"/>
</dbReference>
<dbReference type="GO" id="GO:0045453">
    <property type="term" value="P:bone resorption"/>
    <property type="evidence" value="ECO:0000266"/>
    <property type="project" value="RGD"/>
</dbReference>
<dbReference type="GO" id="GO:0055074">
    <property type="term" value="P:calcium ion homeostasis"/>
    <property type="evidence" value="ECO:0000266"/>
    <property type="project" value="RGD"/>
</dbReference>
<dbReference type="GO" id="GO:0019722">
    <property type="term" value="P:calcium-mediated signaling"/>
    <property type="evidence" value="ECO:0000250"/>
    <property type="project" value="UniProtKB"/>
</dbReference>
<dbReference type="GO" id="GO:0007166">
    <property type="term" value="P:cell surface receptor signaling pathway"/>
    <property type="evidence" value="ECO:0000318"/>
    <property type="project" value="GO_Central"/>
</dbReference>
<dbReference type="GO" id="GO:1990830">
    <property type="term" value="P:cellular response to leukemia inhibitory factor"/>
    <property type="evidence" value="ECO:0000266"/>
    <property type="project" value="RGD"/>
</dbReference>
<dbReference type="GO" id="GO:0019221">
    <property type="term" value="P:cytokine-mediated signaling pathway"/>
    <property type="evidence" value="ECO:0000266"/>
    <property type="project" value="RGD"/>
</dbReference>
<dbReference type="GO" id="GO:0070371">
    <property type="term" value="P:ERK1 and ERK2 cascade"/>
    <property type="evidence" value="ECO:0000266"/>
    <property type="project" value="RGD"/>
</dbReference>
<dbReference type="GO" id="GO:0006955">
    <property type="term" value="P:immune response"/>
    <property type="evidence" value="ECO:0007669"/>
    <property type="project" value="InterPro"/>
</dbReference>
<dbReference type="GO" id="GO:0007254">
    <property type="term" value="P:JNK cascade"/>
    <property type="evidence" value="ECO:0000266"/>
    <property type="project" value="RGD"/>
</dbReference>
<dbReference type="GO" id="GO:0060749">
    <property type="term" value="P:mammary gland alveolus development"/>
    <property type="evidence" value="ECO:0000266"/>
    <property type="project" value="RGD"/>
</dbReference>
<dbReference type="GO" id="GO:0033598">
    <property type="term" value="P:mammary gland epithelial cell proliferation"/>
    <property type="evidence" value="ECO:0000266"/>
    <property type="project" value="RGD"/>
</dbReference>
<dbReference type="GO" id="GO:0002548">
    <property type="term" value="P:monocyte chemotaxis"/>
    <property type="evidence" value="ECO:0000266"/>
    <property type="project" value="RGD"/>
</dbReference>
<dbReference type="GO" id="GO:0000122">
    <property type="term" value="P:negative regulation of transcription by RNA polymerase II"/>
    <property type="evidence" value="ECO:0000266"/>
    <property type="project" value="RGD"/>
</dbReference>
<dbReference type="GO" id="GO:0001503">
    <property type="term" value="P:ossification"/>
    <property type="evidence" value="ECO:0000266"/>
    <property type="project" value="RGD"/>
</dbReference>
<dbReference type="GO" id="GO:0036035">
    <property type="term" value="P:osteoclast development"/>
    <property type="evidence" value="ECO:0000266"/>
    <property type="project" value="RGD"/>
</dbReference>
<dbReference type="GO" id="GO:0030316">
    <property type="term" value="P:osteoclast differentiation"/>
    <property type="evidence" value="ECO:0000266"/>
    <property type="project" value="RGD"/>
</dbReference>
<dbReference type="GO" id="GO:0002158">
    <property type="term" value="P:osteoclast proliferation"/>
    <property type="evidence" value="ECO:0000266"/>
    <property type="project" value="RGD"/>
</dbReference>
<dbReference type="GO" id="GO:0038001">
    <property type="term" value="P:paracrine signaling"/>
    <property type="evidence" value="ECO:0000266"/>
    <property type="project" value="RGD"/>
</dbReference>
<dbReference type="GO" id="GO:0043491">
    <property type="term" value="P:phosphatidylinositol 3-kinase/protein kinase B signal transduction"/>
    <property type="evidence" value="ECO:0000266"/>
    <property type="project" value="RGD"/>
</dbReference>
<dbReference type="GO" id="GO:0045780">
    <property type="term" value="P:positive regulation of bone resorption"/>
    <property type="evidence" value="ECO:0000315"/>
    <property type="project" value="RGD"/>
</dbReference>
<dbReference type="GO" id="GO:0043123">
    <property type="term" value="P:positive regulation of canonical NF-kappaB signal transduction"/>
    <property type="evidence" value="ECO:0000266"/>
    <property type="project" value="RGD"/>
</dbReference>
<dbReference type="GO" id="GO:0051466">
    <property type="term" value="P:positive regulation of corticotropin-releasing hormone secretion"/>
    <property type="evidence" value="ECO:0000266"/>
    <property type="project" value="RGD"/>
</dbReference>
<dbReference type="GO" id="GO:0070374">
    <property type="term" value="P:positive regulation of ERK1 and ERK2 cascade"/>
    <property type="evidence" value="ECO:0000266"/>
    <property type="project" value="RGD"/>
</dbReference>
<dbReference type="GO" id="GO:2001238">
    <property type="term" value="P:positive regulation of extrinsic apoptotic signaling pathway"/>
    <property type="evidence" value="ECO:0000318"/>
    <property type="project" value="GO_Central"/>
</dbReference>
<dbReference type="GO" id="GO:0071812">
    <property type="term" value="P:positive regulation of fever generation by positive regulation of prostaglandin secretion"/>
    <property type="evidence" value="ECO:0000266"/>
    <property type="project" value="RGD"/>
</dbReference>
<dbReference type="GO" id="GO:0010628">
    <property type="term" value="P:positive regulation of gene expression"/>
    <property type="evidence" value="ECO:0000266"/>
    <property type="project" value="RGD"/>
</dbReference>
<dbReference type="GO" id="GO:0034112">
    <property type="term" value="P:positive regulation of homotypic cell-cell adhesion"/>
    <property type="evidence" value="ECO:0000266"/>
    <property type="project" value="RGD"/>
</dbReference>
<dbReference type="GO" id="GO:1902533">
    <property type="term" value="P:positive regulation of intracellular signal transduction"/>
    <property type="evidence" value="ECO:0000266"/>
    <property type="project" value="RGD"/>
</dbReference>
<dbReference type="GO" id="GO:0046330">
    <property type="term" value="P:positive regulation of JNK cascade"/>
    <property type="evidence" value="ECO:0000266"/>
    <property type="project" value="RGD"/>
</dbReference>
<dbReference type="GO" id="GO:2001206">
    <property type="term" value="P:positive regulation of osteoclast development"/>
    <property type="evidence" value="ECO:0000266"/>
    <property type="project" value="RGD"/>
</dbReference>
<dbReference type="GO" id="GO:0045672">
    <property type="term" value="P:positive regulation of osteoclast differentiation"/>
    <property type="evidence" value="ECO:0000315"/>
    <property type="project" value="RGD"/>
</dbReference>
<dbReference type="GO" id="GO:0051897">
    <property type="term" value="P:positive regulation of phosphatidylinositol 3-kinase/protein kinase B signal transduction"/>
    <property type="evidence" value="ECO:0000266"/>
    <property type="project" value="RGD"/>
</dbReference>
<dbReference type="GO" id="GO:0042327">
    <property type="term" value="P:positive regulation of phosphorylation"/>
    <property type="evidence" value="ECO:0000266"/>
    <property type="project" value="RGD"/>
</dbReference>
<dbReference type="GO" id="GO:0050870">
    <property type="term" value="P:positive regulation of T cell activation"/>
    <property type="evidence" value="ECO:0000266"/>
    <property type="project" value="RGD"/>
</dbReference>
<dbReference type="GO" id="GO:0045944">
    <property type="term" value="P:positive regulation of transcription by RNA polymerase II"/>
    <property type="evidence" value="ECO:0000266"/>
    <property type="project" value="RGD"/>
</dbReference>
<dbReference type="GO" id="GO:0045670">
    <property type="term" value="P:regulation of osteoclast differentiation"/>
    <property type="evidence" value="ECO:0000266"/>
    <property type="project" value="RGD"/>
</dbReference>
<dbReference type="GO" id="GO:0045471">
    <property type="term" value="P:response to ethanol"/>
    <property type="evidence" value="ECO:0000270"/>
    <property type="project" value="RGD"/>
</dbReference>
<dbReference type="GO" id="GO:0035902">
    <property type="term" value="P:response to immobilization stress"/>
    <property type="evidence" value="ECO:0000270"/>
    <property type="project" value="RGD"/>
</dbReference>
<dbReference type="GO" id="GO:0044691">
    <property type="term" value="P:tooth eruption"/>
    <property type="evidence" value="ECO:0000266"/>
    <property type="project" value="RGD"/>
</dbReference>
<dbReference type="GO" id="GO:0033209">
    <property type="term" value="P:tumor necrosis factor-mediated signaling pathway"/>
    <property type="evidence" value="ECO:0000266"/>
    <property type="project" value="RGD"/>
</dbReference>
<dbReference type="CDD" id="cd00184">
    <property type="entry name" value="TNF"/>
    <property type="match status" value="1"/>
</dbReference>
<dbReference type="FunFam" id="2.60.120.40:FF:000008">
    <property type="entry name" value="Tumor necrosis factor ligand superfamily member 11"/>
    <property type="match status" value="1"/>
</dbReference>
<dbReference type="Gene3D" id="2.60.120.40">
    <property type="match status" value="1"/>
</dbReference>
<dbReference type="InterPro" id="IPR006052">
    <property type="entry name" value="TNF_dom"/>
</dbReference>
<dbReference type="InterPro" id="IPR017355">
    <property type="entry name" value="TNF_ligand_10/11"/>
</dbReference>
<dbReference type="InterPro" id="IPR008983">
    <property type="entry name" value="Tumour_necrosis_fac-like_dom"/>
</dbReference>
<dbReference type="PANTHER" id="PTHR11471">
    <property type="entry name" value="TUMOR NECROSIS FACTOR FAMILY MEMBER"/>
    <property type="match status" value="1"/>
</dbReference>
<dbReference type="PANTHER" id="PTHR11471:SF3">
    <property type="entry name" value="TUMOR NECROSIS FACTOR LIGAND SUPERFAMILY MEMBER 11"/>
    <property type="match status" value="1"/>
</dbReference>
<dbReference type="Pfam" id="PF00229">
    <property type="entry name" value="TNF"/>
    <property type="match status" value="1"/>
</dbReference>
<dbReference type="PIRSF" id="PIRSF038013">
    <property type="entry name" value="TNF10_TNF11"/>
    <property type="match status" value="1"/>
</dbReference>
<dbReference type="SMART" id="SM00207">
    <property type="entry name" value="TNF"/>
    <property type="match status" value="1"/>
</dbReference>
<dbReference type="SUPFAM" id="SSF49842">
    <property type="entry name" value="TNF-like"/>
    <property type="match status" value="1"/>
</dbReference>
<dbReference type="PROSITE" id="PS50049">
    <property type="entry name" value="THD_2"/>
    <property type="match status" value="1"/>
</dbReference>
<comment type="function">
    <text evidence="2 3">Cytokine that binds to TNFRSF11B/OPG and to TNFRSF11A/RANK. Osteoclast differentiation and activation factor. Augments the ability of dendritic cells to stimulate naive T-cell proliferation. May be an important regulator of interactions between T-cells and dendritic cells and may play a role in the regulation of the T-cell-dependent immune response. May also play an important role in enhanced bone-resorption in humoral hypercalcemia of malignancy. Induces osteoclastogenesis by activating multiple signaling pathways in osteoclast precursor cells, chief among which is induction of long lasting oscillations in the intracellular concentration of Ca (2+) resulting in the activation of NFATC1, which translocates to the nucleus and induces osteoclast-specific gene transcription to allow differentiation of osteoclasts. During osteoclast differentiation, in a TMEM64 and ATP2A2-dependent manner induces activation of CREB1 and mitochondrial ROS generation necessary for proper osteoclast generation.</text>
</comment>
<comment type="subunit">
    <text evidence="3">Homotrimer. Interacts with TNFRSF11A and TNFRSF11B. Interacts with FBN1 (via N-terminal domain) in a Ca(+2)-dependent manner. Interacts with TNFAIP6 (via both Link and CUB domains).</text>
</comment>
<comment type="subcellular location">
    <subcellularLocation>
        <location evidence="1">Cell membrane</location>
        <topology evidence="1">Single-pass type II membrane protein</topology>
    </subcellularLocation>
</comment>
<comment type="subcellular location">
    <molecule>Tumor necrosis factor ligand superfamily member 11, soluble form</molecule>
    <subcellularLocation>
        <location evidence="1">Secreted</location>
    </subcellularLocation>
</comment>
<comment type="tissue specificity">
    <text>Highly expressed in thymus and bone tissues.</text>
</comment>
<comment type="PTM">
    <text evidence="1">The soluble form derives from the membrane form by proteolytic processing.</text>
</comment>
<comment type="similarity">
    <text evidence="7">Belongs to the tumor necrosis factor family.</text>
</comment>
<keyword id="KW-1003">Cell membrane</keyword>
<keyword id="KW-0202">Cytokine</keyword>
<keyword id="KW-0217">Developmental protein</keyword>
<keyword id="KW-0221">Differentiation</keyword>
<keyword id="KW-0325">Glycoprotein</keyword>
<keyword id="KW-0472">Membrane</keyword>
<keyword id="KW-0675">Receptor</keyword>
<keyword id="KW-1185">Reference proteome</keyword>
<keyword id="KW-0964">Secreted</keyword>
<keyword id="KW-0735">Signal-anchor</keyword>
<keyword id="KW-0812">Transmembrane</keyword>
<keyword id="KW-1133">Transmembrane helix</keyword>
<feature type="chain" id="PRO_0000034518" description="Tumor necrosis factor ligand superfamily member 11, membrane form">
    <location>
        <begin position="1"/>
        <end position="318"/>
    </location>
</feature>
<feature type="chain" id="PRO_0000034519" description="Tumor necrosis factor ligand superfamily member 11, soluble form">
    <location>
        <begin position="141"/>
        <end position="318"/>
    </location>
</feature>
<feature type="topological domain" description="Cytoplasmic" evidence="4">
    <location>
        <begin position="1"/>
        <end position="47"/>
    </location>
</feature>
<feature type="transmembrane region" description="Helical; Signal-anchor for type II membrane protein" evidence="4">
    <location>
        <begin position="48"/>
        <end position="68"/>
    </location>
</feature>
<feature type="topological domain" description="Extracellular" evidence="4">
    <location>
        <begin position="69"/>
        <end position="318"/>
    </location>
</feature>
<feature type="domain" description="THD" evidence="5">
    <location>
        <begin position="165"/>
        <end position="314"/>
    </location>
</feature>
<feature type="region of interest" description="Disordered" evidence="6">
    <location>
        <begin position="13"/>
        <end position="41"/>
    </location>
</feature>
<feature type="compositionally biased region" description="Pro residues" evidence="6">
    <location>
        <begin position="31"/>
        <end position="41"/>
    </location>
</feature>
<feature type="site" description="Cleavage" evidence="1">
    <location>
        <begin position="140"/>
        <end position="141"/>
    </location>
</feature>
<feature type="glycosylation site" description="N-linked (GlcNAc...) asparagine" evidence="4">
    <location>
        <position position="199"/>
    </location>
</feature>
<feature type="glycosylation site" description="N-linked (GlcNAc...) asparagine" evidence="4">
    <location>
        <position position="264"/>
    </location>
</feature>
<feature type="sequence conflict" description="In Ref. 2; AAL23963." evidence="7" ref="2">
    <original>I</original>
    <variation>M</variation>
    <location>
        <position position="317"/>
    </location>
</feature>
<sequence>MRRANRDYGKYLRGSEEMGSCPGVPHEGPLHPAPSAPAPAPPPAASRFMFLALLGLGLGQVVCSIALFLYFRAQMDPNRISEDSTRCFYRILRLRENTGLQDSTLESEDTEALPDSCRRMKQAFQGAVQRELQHIVGPQRFSGVPAMMEGSWLDVARRGKPEAQPFAHLTINAADIPSGSHKVSLSSWYHDRGWAKISNMTLSNGKLRVNQDGFYYLYANICFRHHETSGSVPADYLQLMVYVVKTSIKIPSSHNLMKGGSTKNWSGNSEFHFYSINVGGFFKLRAGEEISVQVSNPSLLDPDQDATYFGAFKVQDID</sequence>
<proteinExistence type="evidence at transcript level"/>
<accession>Q9ESE2</accession>
<accession>Q91ZI9</accession>
<evidence type="ECO:0000250" key="1"/>
<evidence type="ECO:0000250" key="2">
    <source>
        <dbReference type="UniProtKB" id="O14788"/>
    </source>
</evidence>
<evidence type="ECO:0000250" key="3">
    <source>
        <dbReference type="UniProtKB" id="O35235"/>
    </source>
</evidence>
<evidence type="ECO:0000255" key="4"/>
<evidence type="ECO:0000255" key="5">
    <source>
        <dbReference type="PROSITE-ProRule" id="PRU01387"/>
    </source>
</evidence>
<evidence type="ECO:0000256" key="6">
    <source>
        <dbReference type="SAM" id="MobiDB-lite"/>
    </source>
</evidence>
<evidence type="ECO:0000305" key="7"/>
<organism>
    <name type="scientific">Rattus norvegicus</name>
    <name type="common">Rat</name>
    <dbReference type="NCBI Taxonomy" id="10116"/>
    <lineage>
        <taxon>Eukaryota</taxon>
        <taxon>Metazoa</taxon>
        <taxon>Chordata</taxon>
        <taxon>Craniata</taxon>
        <taxon>Vertebrata</taxon>
        <taxon>Euteleostomi</taxon>
        <taxon>Mammalia</taxon>
        <taxon>Eutheria</taxon>
        <taxon>Euarchontoglires</taxon>
        <taxon>Glires</taxon>
        <taxon>Rodentia</taxon>
        <taxon>Myomorpha</taxon>
        <taxon>Muroidea</taxon>
        <taxon>Muridae</taxon>
        <taxon>Murinae</taxon>
        <taxon>Rattus</taxon>
    </lineage>
</organism>